<accession>Q7UZW9</accession>
<feature type="chain" id="PRO_0000111390" description="Small ribosomal subunit protein uS9">
    <location>
        <begin position="1"/>
        <end position="136"/>
    </location>
</feature>
<feature type="region of interest" description="Disordered" evidence="2">
    <location>
        <begin position="95"/>
        <end position="136"/>
    </location>
</feature>
<feature type="compositionally biased region" description="Basic and acidic residues" evidence="2">
    <location>
        <begin position="99"/>
        <end position="116"/>
    </location>
</feature>
<feature type="compositionally biased region" description="Basic residues" evidence="2">
    <location>
        <begin position="117"/>
        <end position="136"/>
    </location>
</feature>
<keyword id="KW-0687">Ribonucleoprotein</keyword>
<keyword id="KW-0689">Ribosomal protein</keyword>
<dbReference type="EMBL" id="BX548174">
    <property type="protein sequence ID" value="CAE19990.1"/>
    <property type="molecule type" value="Genomic_DNA"/>
</dbReference>
<dbReference type="RefSeq" id="WP_011133159.1">
    <property type="nucleotide sequence ID" value="NC_005072.1"/>
</dbReference>
<dbReference type="SMR" id="Q7UZW9"/>
<dbReference type="STRING" id="59919.PMM1531"/>
<dbReference type="KEGG" id="pmm:PMM1531"/>
<dbReference type="eggNOG" id="COG0103">
    <property type="taxonomic scope" value="Bacteria"/>
</dbReference>
<dbReference type="HOGENOM" id="CLU_046483_2_1_3"/>
<dbReference type="OrthoDB" id="9803965at2"/>
<dbReference type="Proteomes" id="UP000001026">
    <property type="component" value="Chromosome"/>
</dbReference>
<dbReference type="GO" id="GO:0022627">
    <property type="term" value="C:cytosolic small ribosomal subunit"/>
    <property type="evidence" value="ECO:0007669"/>
    <property type="project" value="TreeGrafter"/>
</dbReference>
<dbReference type="GO" id="GO:0003723">
    <property type="term" value="F:RNA binding"/>
    <property type="evidence" value="ECO:0007669"/>
    <property type="project" value="TreeGrafter"/>
</dbReference>
<dbReference type="GO" id="GO:0003735">
    <property type="term" value="F:structural constituent of ribosome"/>
    <property type="evidence" value="ECO:0007669"/>
    <property type="project" value="InterPro"/>
</dbReference>
<dbReference type="GO" id="GO:0006412">
    <property type="term" value="P:translation"/>
    <property type="evidence" value="ECO:0007669"/>
    <property type="project" value="UniProtKB-UniRule"/>
</dbReference>
<dbReference type="FunFam" id="3.30.230.10:FF:000001">
    <property type="entry name" value="30S ribosomal protein S9"/>
    <property type="match status" value="1"/>
</dbReference>
<dbReference type="Gene3D" id="3.30.230.10">
    <property type="match status" value="1"/>
</dbReference>
<dbReference type="HAMAP" id="MF_00532_B">
    <property type="entry name" value="Ribosomal_uS9_B"/>
    <property type="match status" value="1"/>
</dbReference>
<dbReference type="InterPro" id="IPR020568">
    <property type="entry name" value="Ribosomal_Su5_D2-typ_SF"/>
</dbReference>
<dbReference type="InterPro" id="IPR000754">
    <property type="entry name" value="Ribosomal_uS9"/>
</dbReference>
<dbReference type="InterPro" id="IPR023035">
    <property type="entry name" value="Ribosomal_uS9_bac/plastid"/>
</dbReference>
<dbReference type="InterPro" id="IPR020574">
    <property type="entry name" value="Ribosomal_uS9_CS"/>
</dbReference>
<dbReference type="InterPro" id="IPR014721">
    <property type="entry name" value="Ribsml_uS5_D2-typ_fold_subgr"/>
</dbReference>
<dbReference type="NCBIfam" id="NF001099">
    <property type="entry name" value="PRK00132.1"/>
    <property type="match status" value="1"/>
</dbReference>
<dbReference type="PANTHER" id="PTHR21569">
    <property type="entry name" value="RIBOSOMAL PROTEIN S9"/>
    <property type="match status" value="1"/>
</dbReference>
<dbReference type="PANTHER" id="PTHR21569:SF1">
    <property type="entry name" value="SMALL RIBOSOMAL SUBUNIT PROTEIN US9M"/>
    <property type="match status" value="1"/>
</dbReference>
<dbReference type="Pfam" id="PF00380">
    <property type="entry name" value="Ribosomal_S9"/>
    <property type="match status" value="1"/>
</dbReference>
<dbReference type="SUPFAM" id="SSF54211">
    <property type="entry name" value="Ribosomal protein S5 domain 2-like"/>
    <property type="match status" value="1"/>
</dbReference>
<dbReference type="PROSITE" id="PS00360">
    <property type="entry name" value="RIBOSOMAL_S9"/>
    <property type="match status" value="1"/>
</dbReference>
<protein>
    <recommendedName>
        <fullName evidence="1">Small ribosomal subunit protein uS9</fullName>
    </recommendedName>
    <alternativeName>
        <fullName evidence="3">30S ribosomal protein S9</fullName>
    </alternativeName>
</protein>
<evidence type="ECO:0000255" key="1">
    <source>
        <dbReference type="HAMAP-Rule" id="MF_00532"/>
    </source>
</evidence>
<evidence type="ECO:0000256" key="2">
    <source>
        <dbReference type="SAM" id="MobiDB-lite"/>
    </source>
</evidence>
<evidence type="ECO:0000305" key="3"/>
<reference key="1">
    <citation type="journal article" date="2003" name="Nature">
        <title>Genome divergence in two Prochlorococcus ecotypes reflects oceanic niche differentiation.</title>
        <authorList>
            <person name="Rocap G."/>
            <person name="Larimer F.W."/>
            <person name="Lamerdin J.E."/>
            <person name="Malfatti S."/>
            <person name="Chain P."/>
            <person name="Ahlgren N.A."/>
            <person name="Arellano A."/>
            <person name="Coleman M."/>
            <person name="Hauser L."/>
            <person name="Hess W.R."/>
            <person name="Johnson Z.I."/>
            <person name="Land M.L."/>
            <person name="Lindell D."/>
            <person name="Post A.F."/>
            <person name="Regala W."/>
            <person name="Shah M."/>
            <person name="Shaw S.L."/>
            <person name="Steglich C."/>
            <person name="Sullivan M.B."/>
            <person name="Ting C.S."/>
            <person name="Tolonen A."/>
            <person name="Webb E.A."/>
            <person name="Zinser E.R."/>
            <person name="Chisholm S.W."/>
        </authorList>
    </citation>
    <scope>NUCLEOTIDE SEQUENCE [LARGE SCALE GENOMIC DNA]</scope>
    <source>
        <strain>CCMP1986 / NIES-2087 / MED4</strain>
    </source>
</reference>
<name>RS9_PROMP</name>
<sequence>MNSQVKNKAVYWGTGRRKTSVARVRLIPGNGQIKINGRSGDDYLNFNPSHLNSVKAPLLTLGLENSYDIFVNVFGGGLTGQADAIKQGAARALCGLSPDNRKPLKTEGHLSRDPRSKERKKYGLKKARKAGQFSKR</sequence>
<gene>
    <name evidence="1" type="primary">rpsI</name>
    <name evidence="1" type="synonym">rps9</name>
    <name type="ordered locus">PMM1531</name>
</gene>
<proteinExistence type="inferred from homology"/>
<organism>
    <name type="scientific">Prochlorococcus marinus subsp. pastoris (strain CCMP1986 / NIES-2087 / MED4)</name>
    <dbReference type="NCBI Taxonomy" id="59919"/>
    <lineage>
        <taxon>Bacteria</taxon>
        <taxon>Bacillati</taxon>
        <taxon>Cyanobacteriota</taxon>
        <taxon>Cyanophyceae</taxon>
        <taxon>Synechococcales</taxon>
        <taxon>Prochlorococcaceae</taxon>
        <taxon>Prochlorococcus</taxon>
    </lineage>
</organism>
<comment type="similarity">
    <text evidence="1">Belongs to the universal ribosomal protein uS9 family.</text>
</comment>